<feature type="chain" id="PRO_1000213394" description="2,3-bisphosphoglycerate-dependent phosphoglycerate mutase">
    <location>
        <begin position="1"/>
        <end position="231"/>
    </location>
</feature>
<feature type="active site" description="Tele-phosphohistidine intermediate" evidence="1">
    <location>
        <position position="9"/>
    </location>
</feature>
<feature type="active site" description="Proton donor/acceptor" evidence="1">
    <location>
        <position position="87"/>
    </location>
</feature>
<feature type="binding site" evidence="1">
    <location>
        <begin position="8"/>
        <end position="15"/>
    </location>
    <ligand>
        <name>substrate</name>
    </ligand>
</feature>
<feature type="binding site" evidence="1">
    <location>
        <begin position="21"/>
        <end position="22"/>
    </location>
    <ligand>
        <name>substrate</name>
    </ligand>
</feature>
<feature type="binding site" evidence="1">
    <location>
        <position position="60"/>
    </location>
    <ligand>
        <name>substrate</name>
    </ligand>
</feature>
<feature type="binding site" evidence="1">
    <location>
        <begin position="87"/>
        <end position="90"/>
    </location>
    <ligand>
        <name>substrate</name>
    </ligand>
</feature>
<feature type="binding site" evidence="1">
    <location>
        <position position="98"/>
    </location>
    <ligand>
        <name>substrate</name>
    </ligand>
</feature>
<feature type="binding site" evidence="1">
    <location>
        <begin position="114"/>
        <end position="115"/>
    </location>
    <ligand>
        <name>substrate</name>
    </ligand>
</feature>
<feature type="binding site" evidence="1">
    <location>
        <begin position="183"/>
        <end position="184"/>
    </location>
    <ligand>
        <name>substrate</name>
    </ligand>
</feature>
<feature type="site" description="Transition state stabilizer" evidence="1">
    <location>
        <position position="182"/>
    </location>
</feature>
<protein>
    <recommendedName>
        <fullName evidence="1">2,3-bisphosphoglycerate-dependent phosphoglycerate mutase</fullName>
        <shortName evidence="1">BPG-dependent PGAM</shortName>
        <shortName evidence="1">PGAM</shortName>
        <shortName evidence="1">Phosphoglyceromutase</shortName>
        <shortName evidence="1">dPGM</shortName>
        <ecNumber evidence="1">5.4.2.11</ecNumber>
    </recommendedName>
</protein>
<comment type="function">
    <text evidence="1">Catalyzes the interconversion of 2-phosphoglycerate and 3-phosphoglycerate.</text>
</comment>
<comment type="catalytic activity">
    <reaction evidence="1">
        <text>(2R)-2-phosphoglycerate = (2R)-3-phosphoglycerate</text>
        <dbReference type="Rhea" id="RHEA:15901"/>
        <dbReference type="ChEBI" id="CHEBI:58272"/>
        <dbReference type="ChEBI" id="CHEBI:58289"/>
        <dbReference type="EC" id="5.4.2.11"/>
    </reaction>
</comment>
<comment type="pathway">
    <text evidence="1">Carbohydrate degradation; glycolysis; pyruvate from D-glyceraldehyde 3-phosphate: step 3/5.</text>
</comment>
<comment type="similarity">
    <text evidence="1">Belongs to the phosphoglycerate mutase family. BPG-dependent PGAM subfamily.</text>
</comment>
<sequence length="231" mass="26140">MVKLVFARHGESEWNKANLFTGWADVDLSEKGTQQAIDAGKLIKEAGIAFDLAFTSVLKRAIKTTNLALEYSDQLWVPVEKSWRLNERHYGGLTGKNKAEAAEQFGDEQVHIWRRSYDVLPPDMAKDDEHSAHTDRRYAHLDHSVIPDAENLKVTLERALPFWEDKIAPALVDGKNVFVGAHGNSIRALVKHIKQLSDDEIMNVEIPNFPPLVFEFDDKLNLTAEYYLGGE</sequence>
<evidence type="ECO:0000255" key="1">
    <source>
        <dbReference type="HAMAP-Rule" id="MF_01039"/>
    </source>
</evidence>
<keyword id="KW-0312">Gluconeogenesis</keyword>
<keyword id="KW-0324">Glycolysis</keyword>
<keyword id="KW-0413">Isomerase</keyword>
<proteinExistence type="inferred from homology"/>
<accession>C0MCW5</accession>
<name>GPMA_STRS7</name>
<organism>
    <name type="scientific">Streptococcus equi subsp. zooepidemicus (strain H70)</name>
    <dbReference type="NCBI Taxonomy" id="553483"/>
    <lineage>
        <taxon>Bacteria</taxon>
        <taxon>Bacillati</taxon>
        <taxon>Bacillota</taxon>
        <taxon>Bacilli</taxon>
        <taxon>Lactobacillales</taxon>
        <taxon>Streptococcaceae</taxon>
        <taxon>Streptococcus</taxon>
    </lineage>
</organism>
<gene>
    <name evidence="1" type="primary">gpmA</name>
    <name type="ordered locus">SZO_13630</name>
</gene>
<reference key="1">
    <citation type="journal article" date="2009" name="PLoS Pathog.">
        <title>Genomic evidence for the evolution of Streptococcus equi: host restriction, increased virulence, and genetic exchange with human pathogens.</title>
        <authorList>
            <person name="Holden M.T.G."/>
            <person name="Heather Z."/>
            <person name="Paillot R."/>
            <person name="Steward K.F."/>
            <person name="Webb K."/>
            <person name="Ainslie F."/>
            <person name="Jourdan T."/>
            <person name="Bason N.C."/>
            <person name="Holroyd N.E."/>
            <person name="Mungall K."/>
            <person name="Quail M.A."/>
            <person name="Sanders M."/>
            <person name="Simmonds M."/>
            <person name="Willey D."/>
            <person name="Brooks K."/>
            <person name="Aanensen D.M."/>
            <person name="Spratt B.G."/>
            <person name="Jolley K.A."/>
            <person name="Maiden M.C.J."/>
            <person name="Kehoe M."/>
            <person name="Chanter N."/>
            <person name="Bentley S.D."/>
            <person name="Robinson C."/>
            <person name="Maskell D.J."/>
            <person name="Parkhill J."/>
            <person name="Waller A.S."/>
        </authorList>
    </citation>
    <scope>NUCLEOTIDE SEQUENCE [LARGE SCALE GENOMIC DNA]</scope>
    <source>
        <strain>H70</strain>
    </source>
</reference>
<dbReference type="EC" id="5.4.2.11" evidence="1"/>
<dbReference type="EMBL" id="FM204884">
    <property type="protein sequence ID" value="CAW99932.1"/>
    <property type="molecule type" value="Genomic_DNA"/>
</dbReference>
<dbReference type="SMR" id="C0MCW5"/>
<dbReference type="KEGG" id="seq:SZO_13630"/>
<dbReference type="eggNOG" id="COG0588">
    <property type="taxonomic scope" value="Bacteria"/>
</dbReference>
<dbReference type="HOGENOM" id="CLU_033323_1_5_9"/>
<dbReference type="UniPathway" id="UPA00109">
    <property type="reaction ID" value="UER00186"/>
</dbReference>
<dbReference type="Proteomes" id="UP000001368">
    <property type="component" value="Chromosome"/>
</dbReference>
<dbReference type="GO" id="GO:0004619">
    <property type="term" value="F:phosphoglycerate mutase activity"/>
    <property type="evidence" value="ECO:0007669"/>
    <property type="project" value="UniProtKB-EC"/>
</dbReference>
<dbReference type="GO" id="GO:0006094">
    <property type="term" value="P:gluconeogenesis"/>
    <property type="evidence" value="ECO:0007669"/>
    <property type="project" value="UniProtKB-UniRule"/>
</dbReference>
<dbReference type="GO" id="GO:0006096">
    <property type="term" value="P:glycolytic process"/>
    <property type="evidence" value="ECO:0007669"/>
    <property type="project" value="UniProtKB-UniRule"/>
</dbReference>
<dbReference type="CDD" id="cd07067">
    <property type="entry name" value="HP_PGM_like"/>
    <property type="match status" value="1"/>
</dbReference>
<dbReference type="FunFam" id="3.40.50.1240:FF:000003">
    <property type="entry name" value="2,3-bisphosphoglycerate-dependent phosphoglycerate mutase"/>
    <property type="match status" value="1"/>
</dbReference>
<dbReference type="Gene3D" id="3.40.50.1240">
    <property type="entry name" value="Phosphoglycerate mutase-like"/>
    <property type="match status" value="1"/>
</dbReference>
<dbReference type="HAMAP" id="MF_01039">
    <property type="entry name" value="PGAM_GpmA"/>
    <property type="match status" value="1"/>
</dbReference>
<dbReference type="InterPro" id="IPR013078">
    <property type="entry name" value="His_Pase_superF_clade-1"/>
</dbReference>
<dbReference type="InterPro" id="IPR029033">
    <property type="entry name" value="His_PPase_superfam"/>
</dbReference>
<dbReference type="InterPro" id="IPR005952">
    <property type="entry name" value="Phosphogly_mut1"/>
</dbReference>
<dbReference type="NCBIfam" id="TIGR01258">
    <property type="entry name" value="pgm_1"/>
    <property type="match status" value="1"/>
</dbReference>
<dbReference type="NCBIfam" id="NF010713">
    <property type="entry name" value="PRK14115.1"/>
    <property type="match status" value="1"/>
</dbReference>
<dbReference type="NCBIfam" id="NF010715">
    <property type="entry name" value="PRK14117.1"/>
    <property type="match status" value="1"/>
</dbReference>
<dbReference type="PANTHER" id="PTHR11931">
    <property type="entry name" value="PHOSPHOGLYCERATE MUTASE"/>
    <property type="match status" value="1"/>
</dbReference>
<dbReference type="Pfam" id="PF00300">
    <property type="entry name" value="His_Phos_1"/>
    <property type="match status" value="1"/>
</dbReference>
<dbReference type="PIRSF" id="PIRSF000709">
    <property type="entry name" value="6PFK_2-Ptase"/>
    <property type="match status" value="1"/>
</dbReference>
<dbReference type="SMART" id="SM00855">
    <property type="entry name" value="PGAM"/>
    <property type="match status" value="1"/>
</dbReference>
<dbReference type="SUPFAM" id="SSF53254">
    <property type="entry name" value="Phosphoglycerate mutase-like"/>
    <property type="match status" value="1"/>
</dbReference>